<dbReference type="EMBL" id="Y08501">
    <property type="protein sequence ID" value="CAA69837.1"/>
    <property type="molecule type" value="Genomic_DNA"/>
</dbReference>
<dbReference type="EMBL" id="BK010421">
    <property type="status" value="NOT_ANNOTATED_CDS"/>
    <property type="molecule type" value="Genomic_DNA"/>
</dbReference>
<dbReference type="EMBL" id="AC007143">
    <property type="protein sequence ID" value="AAM15411.1"/>
    <property type="molecule type" value="Genomic_DNA"/>
</dbReference>
<dbReference type="EMBL" id="AC007730">
    <property type="protein sequence ID" value="AAM15517.1"/>
    <property type="molecule type" value="Genomic_DNA"/>
</dbReference>
<dbReference type="EMBL" id="AY649228">
    <property type="protein sequence ID" value="AAT69145.1"/>
    <property type="molecule type" value="Genomic_DNA"/>
</dbReference>
<dbReference type="EMBL" id="AY219099">
    <property type="protein sequence ID" value="AAO37186.1"/>
    <property type="molecule type" value="mRNA"/>
</dbReference>
<dbReference type="RefSeq" id="NP_085551.1">
    <property type="nucleotide sequence ID" value="NC_001284.2"/>
</dbReference>
<dbReference type="RefSeq" id="NP_565341.1">
    <property type="nucleotide sequence ID" value="NM_126733.2"/>
</dbReference>
<dbReference type="SMR" id="P92531"/>
<dbReference type="STRING" id="3702.P92531"/>
<dbReference type="PaxDb" id="3702-ATMG00970.1"/>
<dbReference type="EnsemblPlants" id="ATMG00970.1">
    <property type="protein sequence ID" value="ATMG00970.1"/>
    <property type="gene ID" value="ATMG00970"/>
</dbReference>
<dbReference type="Gramene" id="ATMG00970.1">
    <property type="protein sequence ID" value="ATMG00970.1"/>
    <property type="gene ID" value="ATMG00970"/>
</dbReference>
<dbReference type="KEGG" id="ath:AT2G07676"/>
<dbReference type="Araport" id="ATMG00970"/>
<dbReference type="TAIR" id="ATMG00970">
    <property type="gene designation" value="ORF117"/>
</dbReference>
<dbReference type="eggNOG" id="ENOG502RRI3">
    <property type="taxonomic scope" value="Eukaryota"/>
</dbReference>
<dbReference type="HOGENOM" id="CLU_2076337_0_0_1"/>
<dbReference type="InParanoid" id="P92531"/>
<dbReference type="PRO" id="PR:P92531"/>
<dbReference type="Proteomes" id="UP000006548">
    <property type="component" value="Mitochondrion MT"/>
</dbReference>
<dbReference type="ExpressionAtlas" id="P92531">
    <property type="expression patterns" value="baseline and differential"/>
</dbReference>
<dbReference type="GO" id="GO:0005739">
    <property type="term" value="C:mitochondrion"/>
    <property type="evidence" value="ECO:0007669"/>
    <property type="project" value="UniProtKB-SubCell"/>
</dbReference>
<gene>
    <name type="ordered locus">AtMg00970</name>
</gene>
<organism>
    <name type="scientific">Arabidopsis thaliana</name>
    <name type="common">Mouse-ear cress</name>
    <dbReference type="NCBI Taxonomy" id="3702"/>
    <lineage>
        <taxon>Eukaryota</taxon>
        <taxon>Viridiplantae</taxon>
        <taxon>Streptophyta</taxon>
        <taxon>Embryophyta</taxon>
        <taxon>Tracheophyta</taxon>
        <taxon>Spermatophyta</taxon>
        <taxon>Magnoliopsida</taxon>
        <taxon>eudicotyledons</taxon>
        <taxon>Gunneridae</taxon>
        <taxon>Pentapetalae</taxon>
        <taxon>rosids</taxon>
        <taxon>malvids</taxon>
        <taxon>Brassicales</taxon>
        <taxon>Brassicaceae</taxon>
        <taxon>Camelineae</taxon>
        <taxon>Arabidopsis</taxon>
    </lineage>
</organism>
<reference key="1">
    <citation type="journal article" date="1997" name="Nat. Genet.">
        <title>The mitochondrial genome of Arabidopsis thaliana contains 57 genes in 366,924 nucleotides.</title>
        <authorList>
            <person name="Unseld M."/>
            <person name="Marienfeld J.R."/>
            <person name="Brandt P."/>
            <person name="Brennicke A."/>
        </authorList>
    </citation>
    <scope>NUCLEOTIDE SEQUENCE [LARGE SCALE GENOMIC DNA]</scope>
    <source>
        <strain>cv. C24</strain>
    </source>
</reference>
<reference key="2">
    <citation type="journal article" date="2018" name="Plant Cell">
        <title>Correction of persistent errors in Arabidopsis reference mitochondrial genomes.</title>
        <authorList>
            <person name="Sloan D.B."/>
            <person name="Wu Z."/>
            <person name="Sharbrough J."/>
        </authorList>
    </citation>
    <scope>NUCLEOTIDE SEQUENCE [LARGE SCALE GENOMIC DNA]</scope>
    <source>
        <strain>cv. Columbia</strain>
    </source>
</reference>
<reference key="3">
    <citation type="journal article" date="1999" name="Nature">
        <title>Sequence and analysis of chromosome 2 of the plant Arabidopsis thaliana.</title>
        <authorList>
            <person name="Lin X."/>
            <person name="Kaul S."/>
            <person name="Rounsley S.D."/>
            <person name="Shea T.P."/>
            <person name="Benito M.-I."/>
            <person name="Town C.D."/>
            <person name="Fujii C.Y."/>
            <person name="Mason T.M."/>
            <person name="Bowman C.L."/>
            <person name="Barnstead M.E."/>
            <person name="Feldblyum T.V."/>
            <person name="Buell C.R."/>
            <person name="Ketchum K.A."/>
            <person name="Lee J.J."/>
            <person name="Ronning C.M."/>
            <person name="Koo H.L."/>
            <person name="Moffat K.S."/>
            <person name="Cronin L.A."/>
            <person name="Shen M."/>
            <person name="Pai G."/>
            <person name="Van Aken S."/>
            <person name="Umayam L."/>
            <person name="Tallon L.J."/>
            <person name="Gill J.E."/>
            <person name="Adams M.D."/>
            <person name="Carrera A.J."/>
            <person name="Creasy T.H."/>
            <person name="Goodman H.M."/>
            <person name="Somerville C.R."/>
            <person name="Copenhaver G.P."/>
            <person name="Preuss D."/>
            <person name="Nierman W.C."/>
            <person name="White O."/>
            <person name="Eisen J.A."/>
            <person name="Salzberg S.L."/>
            <person name="Fraser C.M."/>
            <person name="Venter J.C."/>
        </authorList>
    </citation>
    <scope>NUCLEOTIDE SEQUENCE [LARGE SCALE GENOMIC DNA] (AT2G07676)</scope>
    <source>
        <strain>cv. Columbia</strain>
    </source>
</reference>
<reference key="4">
    <citation type="submission" date="2004-06" db="EMBL/GenBank/DDBJ databases">
        <authorList>
            <person name="Underwood B.A."/>
            <person name="Xiao Y.-L."/>
            <person name="Moskal W.A. Jr."/>
            <person name="Monaghan E.L."/>
            <person name="Wang W."/>
            <person name="Redman J.C."/>
            <person name="Wu H.C."/>
            <person name="Utterback T."/>
            <person name="Town C.D."/>
        </authorList>
    </citation>
    <scope>NUCLEOTIDE SEQUENCE [LARGE SCALE GENOMIC DNA]</scope>
    <source>
        <strain>cv. Columbia</strain>
    </source>
</reference>
<reference key="5">
    <citation type="journal article" date="2005" name="Plant Physiol.">
        <title>Analysis of the cDNAs of hypothetical genes on Arabidopsis chromosome 2 reveals numerous transcript variants.</title>
        <authorList>
            <person name="Xiao Y.-L."/>
            <person name="Smith S.R."/>
            <person name="Ishmael N."/>
            <person name="Redman J.C."/>
            <person name="Kumar N."/>
            <person name="Monaghan E.L."/>
            <person name="Ayele M."/>
            <person name="Haas B.J."/>
            <person name="Wu H.C."/>
            <person name="Town C.D."/>
        </authorList>
    </citation>
    <scope>NUCLEOTIDE SEQUENCE [LARGE SCALE MRNA] (AT2G07676)</scope>
    <source>
        <strain>cv. Columbia</strain>
    </source>
</reference>
<geneLocation type="mitochondrion"/>
<name>M970_ARATH</name>
<comment type="subcellular location">
    <subcellularLocation>
        <location evidence="1">Mitochondrion</location>
    </subcellularLocation>
</comment>
<comment type="miscellaneous">
    <text>A stretch of 270 kb of the mitochondrial genome is duplicated within the centromere of chromosome 2 resulting in the duplication of the gene. The expression of this duplicated gene (At2g07676) is demonstrated.</text>
</comment>
<feature type="chain" id="PRO_0000196803" description="Uncharacterized mitochondrial protein AtMg00970">
    <location>
        <begin position="1"/>
        <end position="117"/>
    </location>
</feature>
<feature type="sequence conflict" description="In Ref. 3; AAM15411/AAM15517, 4; AAT69145 and 5; AAO37186." evidence="1" ref="3 4 5">
    <original>KKEWT</original>
    <variation>EEGSGA</variation>
    <location>
        <begin position="32"/>
        <end position="36"/>
    </location>
</feature>
<feature type="sequence conflict" description="In Ref. 3; AAM15411." evidence="1" ref="3">
    <original>S</original>
    <variation>Y</variation>
    <location>
        <position position="66"/>
    </location>
</feature>
<evidence type="ECO:0000305" key="1"/>
<protein>
    <recommendedName>
        <fullName>Uncharacterized mitochondrial protein AtMg00970</fullName>
    </recommendedName>
    <alternativeName>
        <fullName>ORF117</fullName>
    </alternativeName>
</protein>
<accession>P92531</accession>
<accession>Q1ZXY1</accession>
<accession>Q6DR87</accession>
<accession>Q8S879</accession>
<accession>Q8S8C2</accession>
<keyword id="KW-0496">Mitochondrion</keyword>
<keyword id="KW-1185">Reference proteome</keyword>
<proteinExistence type="predicted"/>
<sequence>MVASDSRPMRLRLRAELFLASFAVREESIRSKKEWTYISKYIKGILKSRLSRREQSRWNIIDDTTSMAFFEEFASLNPVFHTFLFYGRRDGEDLSFHIVGFFRLSIRGYIFFLWESF</sequence>